<protein>
    <recommendedName>
        <fullName>FK506-binding protein 1</fullName>
        <shortName>FKBP</shortName>
        <ecNumber>5.2.1.8</ecNumber>
    </recommendedName>
    <alternativeName>
        <fullName>Peptidyl-prolyl cis-trans isomerase</fullName>
        <shortName>PPIase</shortName>
    </alternativeName>
    <alternativeName>
        <fullName>Rapamycin-binding protein</fullName>
    </alternativeName>
</protein>
<feature type="chain" id="PRO_0000233330" description="FK506-binding protein 1">
    <location>
        <begin position="1"/>
        <end position="108"/>
    </location>
</feature>
<feature type="domain" description="PPIase FKBP-type" evidence="2">
    <location>
        <begin position="20"/>
        <end position="108"/>
    </location>
</feature>
<name>FKBP_YARLI</name>
<keyword id="KW-0963">Cytoplasm</keyword>
<keyword id="KW-0413">Isomerase</keyword>
<keyword id="KW-1185">Reference proteome</keyword>
<keyword id="KW-0697">Rotamase</keyword>
<sequence>MGVTVKQLQPGDGKTYPKKGDAVTIHYVGTLENGQKFDSSRDRGEPFKTTIGVGDVIRGWDEGVPKLSLGERSVLTISGDYGYGERGFPGLIPPNATLVFDVELLGIN</sequence>
<organism>
    <name type="scientific">Yarrowia lipolytica (strain CLIB 122 / E 150)</name>
    <name type="common">Yeast</name>
    <name type="synonym">Candida lipolytica</name>
    <dbReference type="NCBI Taxonomy" id="284591"/>
    <lineage>
        <taxon>Eukaryota</taxon>
        <taxon>Fungi</taxon>
        <taxon>Dikarya</taxon>
        <taxon>Ascomycota</taxon>
        <taxon>Saccharomycotina</taxon>
        <taxon>Dipodascomycetes</taxon>
        <taxon>Dipodascales</taxon>
        <taxon>Dipodascales incertae sedis</taxon>
        <taxon>Yarrowia</taxon>
    </lineage>
</organism>
<evidence type="ECO:0000250" key="1"/>
<evidence type="ECO:0000255" key="2">
    <source>
        <dbReference type="PROSITE-ProRule" id="PRU00277"/>
    </source>
</evidence>
<evidence type="ECO:0000305" key="3"/>
<reference key="1">
    <citation type="journal article" date="2004" name="Nature">
        <title>Genome evolution in yeasts.</title>
        <authorList>
            <person name="Dujon B."/>
            <person name="Sherman D."/>
            <person name="Fischer G."/>
            <person name="Durrens P."/>
            <person name="Casaregola S."/>
            <person name="Lafontaine I."/>
            <person name="de Montigny J."/>
            <person name="Marck C."/>
            <person name="Neuveglise C."/>
            <person name="Talla E."/>
            <person name="Goffard N."/>
            <person name="Frangeul L."/>
            <person name="Aigle M."/>
            <person name="Anthouard V."/>
            <person name="Babour A."/>
            <person name="Barbe V."/>
            <person name="Barnay S."/>
            <person name="Blanchin S."/>
            <person name="Beckerich J.-M."/>
            <person name="Beyne E."/>
            <person name="Bleykasten C."/>
            <person name="Boisrame A."/>
            <person name="Boyer J."/>
            <person name="Cattolico L."/>
            <person name="Confanioleri F."/>
            <person name="de Daruvar A."/>
            <person name="Despons L."/>
            <person name="Fabre E."/>
            <person name="Fairhead C."/>
            <person name="Ferry-Dumazet H."/>
            <person name="Groppi A."/>
            <person name="Hantraye F."/>
            <person name="Hennequin C."/>
            <person name="Jauniaux N."/>
            <person name="Joyet P."/>
            <person name="Kachouri R."/>
            <person name="Kerrest A."/>
            <person name="Koszul R."/>
            <person name="Lemaire M."/>
            <person name="Lesur I."/>
            <person name="Ma L."/>
            <person name="Muller H."/>
            <person name="Nicaud J.-M."/>
            <person name="Nikolski M."/>
            <person name="Oztas S."/>
            <person name="Ozier-Kalogeropoulos O."/>
            <person name="Pellenz S."/>
            <person name="Potier S."/>
            <person name="Richard G.-F."/>
            <person name="Straub M.-L."/>
            <person name="Suleau A."/>
            <person name="Swennen D."/>
            <person name="Tekaia F."/>
            <person name="Wesolowski-Louvel M."/>
            <person name="Westhof E."/>
            <person name="Wirth B."/>
            <person name="Zeniou-Meyer M."/>
            <person name="Zivanovic Y."/>
            <person name="Bolotin-Fukuhara M."/>
            <person name="Thierry A."/>
            <person name="Bouchier C."/>
            <person name="Caudron B."/>
            <person name="Scarpelli C."/>
            <person name="Gaillardin C."/>
            <person name="Weissenbach J."/>
            <person name="Wincker P."/>
            <person name="Souciet J.-L."/>
        </authorList>
    </citation>
    <scope>NUCLEOTIDE SEQUENCE [LARGE SCALE GENOMIC DNA]</scope>
    <source>
        <strain>CLIB 122 / E 150</strain>
    </source>
</reference>
<proteinExistence type="inferred from homology"/>
<dbReference type="EC" id="5.2.1.8"/>
<dbReference type="EMBL" id="CR382128">
    <property type="protein sequence ID" value="CAG82966.1"/>
    <property type="molecule type" value="Genomic_DNA"/>
</dbReference>
<dbReference type="RefSeq" id="XP_500721.1">
    <property type="nucleotide sequence ID" value="XM_500721.1"/>
</dbReference>
<dbReference type="SMR" id="Q6CF41"/>
<dbReference type="FunCoup" id="Q6CF41">
    <property type="interactions" value="396"/>
</dbReference>
<dbReference type="STRING" id="284591.Q6CF41"/>
<dbReference type="EnsemblFungi" id="CAG82966">
    <property type="protein sequence ID" value="CAG82966"/>
    <property type="gene ID" value="YALI0_B10450g"/>
</dbReference>
<dbReference type="KEGG" id="yli:2906901"/>
<dbReference type="VEuPathDB" id="FungiDB:YALI0_B10450g"/>
<dbReference type="HOGENOM" id="CLU_013615_12_1_1"/>
<dbReference type="InParanoid" id="Q6CF41"/>
<dbReference type="OMA" id="EQFDASW"/>
<dbReference type="OrthoDB" id="114532at4891"/>
<dbReference type="Proteomes" id="UP000001300">
    <property type="component" value="Chromosome B"/>
</dbReference>
<dbReference type="GO" id="GO:0005737">
    <property type="term" value="C:cytoplasm"/>
    <property type="evidence" value="ECO:0000318"/>
    <property type="project" value="GO_Central"/>
</dbReference>
<dbReference type="GO" id="GO:0003755">
    <property type="term" value="F:peptidyl-prolyl cis-trans isomerase activity"/>
    <property type="evidence" value="ECO:0000318"/>
    <property type="project" value="GO_Central"/>
</dbReference>
<dbReference type="FunFam" id="3.10.50.40:FF:000025">
    <property type="entry name" value="Peptidylprolyl isomerase"/>
    <property type="match status" value="1"/>
</dbReference>
<dbReference type="Gene3D" id="3.10.50.40">
    <property type="match status" value="1"/>
</dbReference>
<dbReference type="InterPro" id="IPR050689">
    <property type="entry name" value="FKBP-type_PPIase"/>
</dbReference>
<dbReference type="InterPro" id="IPR046357">
    <property type="entry name" value="PPIase_dom_sf"/>
</dbReference>
<dbReference type="InterPro" id="IPR001179">
    <property type="entry name" value="PPIase_FKBP_dom"/>
</dbReference>
<dbReference type="PANTHER" id="PTHR10516:SF443">
    <property type="entry name" value="FK506-BINDING PROTEIN 59-RELATED"/>
    <property type="match status" value="1"/>
</dbReference>
<dbReference type="PANTHER" id="PTHR10516">
    <property type="entry name" value="PEPTIDYL-PROLYL CIS-TRANS ISOMERASE"/>
    <property type="match status" value="1"/>
</dbReference>
<dbReference type="Pfam" id="PF00254">
    <property type="entry name" value="FKBP_C"/>
    <property type="match status" value="1"/>
</dbReference>
<dbReference type="SUPFAM" id="SSF54534">
    <property type="entry name" value="FKBP-like"/>
    <property type="match status" value="1"/>
</dbReference>
<dbReference type="PROSITE" id="PS50059">
    <property type="entry name" value="FKBP_PPIASE"/>
    <property type="match status" value="1"/>
</dbReference>
<accession>Q6CF41</accession>
<comment type="function">
    <text evidence="1">PPIases accelerate the folding of proteins. It catalyzes the cis-trans isomerization of proline imidic peptide bonds in oligopeptides (By similarity).</text>
</comment>
<comment type="catalytic activity">
    <reaction>
        <text>[protein]-peptidylproline (omega=180) = [protein]-peptidylproline (omega=0)</text>
        <dbReference type="Rhea" id="RHEA:16237"/>
        <dbReference type="Rhea" id="RHEA-COMP:10747"/>
        <dbReference type="Rhea" id="RHEA-COMP:10748"/>
        <dbReference type="ChEBI" id="CHEBI:83833"/>
        <dbReference type="ChEBI" id="CHEBI:83834"/>
        <dbReference type="EC" id="5.2.1.8"/>
    </reaction>
</comment>
<comment type="activity regulation">
    <text evidence="1">Inhibited by both FK506 and rapamycin.</text>
</comment>
<comment type="subcellular location">
    <subcellularLocation>
        <location evidence="1">Cytoplasm</location>
    </subcellularLocation>
</comment>
<comment type="similarity">
    <text evidence="3">Belongs to the FKBP-type PPIase family. FKBP1 subfamily.</text>
</comment>
<gene>
    <name type="primary">FPR1</name>
    <name type="ordered locus">YALI0B10450g</name>
</gene>